<protein>
    <recommendedName>
        <fullName evidence="1">UDP-N-acetylglucosamine--N-acetylmuramyl-(pentapeptide) pyrophosphoryl-undecaprenol N-acetylglucosamine transferase</fullName>
        <ecNumber evidence="1">2.4.1.227</ecNumber>
    </recommendedName>
    <alternativeName>
        <fullName evidence="1">Undecaprenyl-PP-MurNAc-pentapeptide-UDPGlcNAc GlcNAc transferase</fullName>
    </alternativeName>
</protein>
<keyword id="KW-0131">Cell cycle</keyword>
<keyword id="KW-0132">Cell division</keyword>
<keyword id="KW-0997">Cell inner membrane</keyword>
<keyword id="KW-1003">Cell membrane</keyword>
<keyword id="KW-0133">Cell shape</keyword>
<keyword id="KW-0961">Cell wall biogenesis/degradation</keyword>
<keyword id="KW-0328">Glycosyltransferase</keyword>
<keyword id="KW-0472">Membrane</keyword>
<keyword id="KW-0573">Peptidoglycan synthesis</keyword>
<keyword id="KW-0808">Transferase</keyword>
<comment type="function">
    <text evidence="1">Cell wall formation. Catalyzes the transfer of a GlcNAc subunit on undecaprenyl-pyrophosphoryl-MurNAc-pentapeptide (lipid intermediate I) to form undecaprenyl-pyrophosphoryl-MurNAc-(pentapeptide)GlcNAc (lipid intermediate II).</text>
</comment>
<comment type="catalytic activity">
    <reaction evidence="1">
        <text>di-trans,octa-cis-undecaprenyl diphospho-N-acetyl-alpha-D-muramoyl-L-alanyl-D-glutamyl-meso-2,6-diaminopimeloyl-D-alanyl-D-alanine + UDP-N-acetyl-alpha-D-glucosamine = di-trans,octa-cis-undecaprenyl diphospho-[N-acetyl-alpha-D-glucosaminyl-(1-&gt;4)]-N-acetyl-alpha-D-muramoyl-L-alanyl-D-glutamyl-meso-2,6-diaminopimeloyl-D-alanyl-D-alanine + UDP + H(+)</text>
        <dbReference type="Rhea" id="RHEA:31227"/>
        <dbReference type="ChEBI" id="CHEBI:15378"/>
        <dbReference type="ChEBI" id="CHEBI:57705"/>
        <dbReference type="ChEBI" id="CHEBI:58223"/>
        <dbReference type="ChEBI" id="CHEBI:61387"/>
        <dbReference type="ChEBI" id="CHEBI:61388"/>
        <dbReference type="EC" id="2.4.1.227"/>
    </reaction>
</comment>
<comment type="pathway">
    <text evidence="1">Cell wall biogenesis; peptidoglycan biosynthesis.</text>
</comment>
<comment type="subcellular location">
    <subcellularLocation>
        <location evidence="1">Cell inner membrane</location>
        <topology evidence="1">Peripheral membrane protein</topology>
        <orientation evidence="1">Cytoplasmic side</orientation>
    </subcellularLocation>
</comment>
<comment type="similarity">
    <text evidence="1">Belongs to the glycosyltransferase 28 family. MurG subfamily.</text>
</comment>
<organism>
    <name type="scientific">Rickettsia felis (strain ATCC VR-1525 / URRWXCal2)</name>
    <name type="common">Rickettsia azadi</name>
    <dbReference type="NCBI Taxonomy" id="315456"/>
    <lineage>
        <taxon>Bacteria</taxon>
        <taxon>Pseudomonadati</taxon>
        <taxon>Pseudomonadota</taxon>
        <taxon>Alphaproteobacteria</taxon>
        <taxon>Rickettsiales</taxon>
        <taxon>Rickettsiaceae</taxon>
        <taxon>Rickettsieae</taxon>
        <taxon>Rickettsia</taxon>
        <taxon>spotted fever group</taxon>
    </lineage>
</organism>
<feature type="chain" id="PRO_0000225090" description="UDP-N-acetylglucosamine--N-acetylmuramyl-(pentapeptide) pyrophosphoryl-undecaprenol N-acetylglucosamine transferase">
    <location>
        <begin position="1"/>
        <end position="360"/>
    </location>
</feature>
<feature type="binding site" evidence="1">
    <location>
        <begin position="11"/>
        <end position="13"/>
    </location>
    <ligand>
        <name>UDP-N-acetyl-alpha-D-glucosamine</name>
        <dbReference type="ChEBI" id="CHEBI:57705"/>
    </ligand>
</feature>
<feature type="binding site" evidence="1">
    <location>
        <position position="117"/>
    </location>
    <ligand>
        <name>UDP-N-acetyl-alpha-D-glucosamine</name>
        <dbReference type="ChEBI" id="CHEBI:57705"/>
    </ligand>
</feature>
<feature type="binding site" evidence="1">
    <location>
        <position position="160"/>
    </location>
    <ligand>
        <name>UDP-N-acetyl-alpha-D-glucosamine</name>
        <dbReference type="ChEBI" id="CHEBI:57705"/>
    </ligand>
</feature>
<feature type="binding site" evidence="1">
    <location>
        <position position="192"/>
    </location>
    <ligand>
        <name>UDP-N-acetyl-alpha-D-glucosamine</name>
        <dbReference type="ChEBI" id="CHEBI:57705"/>
    </ligand>
</feature>
<feature type="binding site" evidence="1">
    <location>
        <position position="294"/>
    </location>
    <ligand>
        <name>UDP-N-acetyl-alpha-D-glucosamine</name>
        <dbReference type="ChEBI" id="CHEBI:57705"/>
    </ligand>
</feature>
<reference key="1">
    <citation type="journal article" date="2005" name="PLoS Biol.">
        <title>The genome sequence of Rickettsia felis identifies the first putative conjugative plasmid in an obligate intracellular parasite.</title>
        <authorList>
            <person name="Ogata H."/>
            <person name="Renesto P."/>
            <person name="Audic S."/>
            <person name="Robert C."/>
            <person name="Blanc G."/>
            <person name="Fournier P.-E."/>
            <person name="Parinello H."/>
            <person name="Claverie J.-M."/>
            <person name="Raoult D."/>
        </authorList>
    </citation>
    <scope>NUCLEOTIDE SEQUENCE [LARGE SCALE GENOMIC DNA]</scope>
    <source>
        <strain>ATCC VR-1525 / URRWXCal2</strain>
    </source>
</reference>
<name>MURG_RICFE</name>
<accession>Q4ULT6</accession>
<evidence type="ECO:0000255" key="1">
    <source>
        <dbReference type="HAMAP-Rule" id="MF_00033"/>
    </source>
</evidence>
<proteinExistence type="inferred from homology"/>
<sequence length="360" mass="40530">MKKIILVAGGTGGHFFPAVALGEELIKRGYEVHFITDLRCQKYINQNMGLIFHILDLKRSDNIFLFLPNLSIAILKAIKLLYNIRSSVIIGFGGYPVIAPMFAAIFLRVPIIIYEQNSYLGKVNKFFASFAKKIAISYEDVKNLPEFVKSKIVVTGGIVRENIRNVCHSRESGNDIKRSKDNIFTVFIFGGSQGAKLFSELIPASIQILMQKQPNLKLNIIQQAALDDQVKIKDIYSKLNINYEFAEFFDNMALKYKEADLVISRAGASTIEELTYIGLPAIFIPLPSAADNHQYYNAKLLADKKAGWCLEQNSISAEELADKILDLINNPKILEDTSQNLLKRRKEGHVLLSDLIERVI</sequence>
<dbReference type="EC" id="2.4.1.227" evidence="1"/>
<dbReference type="EMBL" id="CP000053">
    <property type="protein sequence ID" value="AAY61487.1"/>
    <property type="molecule type" value="Genomic_DNA"/>
</dbReference>
<dbReference type="SMR" id="Q4ULT6"/>
<dbReference type="STRING" id="315456.RF_0636"/>
<dbReference type="CAZy" id="GT28">
    <property type="family name" value="Glycosyltransferase Family 28"/>
</dbReference>
<dbReference type="KEGG" id="rfe:RF_0636"/>
<dbReference type="eggNOG" id="COG0707">
    <property type="taxonomic scope" value="Bacteria"/>
</dbReference>
<dbReference type="HOGENOM" id="CLU_037404_2_1_5"/>
<dbReference type="OrthoDB" id="9808936at2"/>
<dbReference type="UniPathway" id="UPA00219"/>
<dbReference type="Proteomes" id="UP000008548">
    <property type="component" value="Chromosome"/>
</dbReference>
<dbReference type="GO" id="GO:0005886">
    <property type="term" value="C:plasma membrane"/>
    <property type="evidence" value="ECO:0007669"/>
    <property type="project" value="UniProtKB-SubCell"/>
</dbReference>
<dbReference type="GO" id="GO:0051991">
    <property type="term" value="F:UDP-N-acetyl-D-glucosamine:N-acetylmuramoyl-L-alanyl-D-glutamyl-meso-2,6-diaminopimelyl-D-alanyl-D-alanine-diphosphoundecaprenol 4-beta-N-acetylglucosaminlytransferase activity"/>
    <property type="evidence" value="ECO:0007669"/>
    <property type="project" value="RHEA"/>
</dbReference>
<dbReference type="GO" id="GO:0050511">
    <property type="term" value="F:undecaprenyldiphospho-muramoylpentapeptide beta-N-acetylglucosaminyltransferase activity"/>
    <property type="evidence" value="ECO:0007669"/>
    <property type="project" value="UniProtKB-UniRule"/>
</dbReference>
<dbReference type="GO" id="GO:0005975">
    <property type="term" value="P:carbohydrate metabolic process"/>
    <property type="evidence" value="ECO:0007669"/>
    <property type="project" value="InterPro"/>
</dbReference>
<dbReference type="GO" id="GO:0051301">
    <property type="term" value="P:cell division"/>
    <property type="evidence" value="ECO:0007669"/>
    <property type="project" value="UniProtKB-KW"/>
</dbReference>
<dbReference type="GO" id="GO:0071555">
    <property type="term" value="P:cell wall organization"/>
    <property type="evidence" value="ECO:0007669"/>
    <property type="project" value="UniProtKB-KW"/>
</dbReference>
<dbReference type="GO" id="GO:0030259">
    <property type="term" value="P:lipid glycosylation"/>
    <property type="evidence" value="ECO:0007669"/>
    <property type="project" value="UniProtKB-UniRule"/>
</dbReference>
<dbReference type="GO" id="GO:0009252">
    <property type="term" value="P:peptidoglycan biosynthetic process"/>
    <property type="evidence" value="ECO:0007669"/>
    <property type="project" value="UniProtKB-UniRule"/>
</dbReference>
<dbReference type="GO" id="GO:0008360">
    <property type="term" value="P:regulation of cell shape"/>
    <property type="evidence" value="ECO:0007669"/>
    <property type="project" value="UniProtKB-KW"/>
</dbReference>
<dbReference type="CDD" id="cd03785">
    <property type="entry name" value="GT28_MurG"/>
    <property type="match status" value="1"/>
</dbReference>
<dbReference type="Gene3D" id="3.40.50.2000">
    <property type="entry name" value="Glycogen Phosphorylase B"/>
    <property type="match status" value="2"/>
</dbReference>
<dbReference type="HAMAP" id="MF_00033">
    <property type="entry name" value="MurG"/>
    <property type="match status" value="1"/>
</dbReference>
<dbReference type="InterPro" id="IPR006009">
    <property type="entry name" value="GlcNAc_MurG"/>
</dbReference>
<dbReference type="InterPro" id="IPR007235">
    <property type="entry name" value="Glyco_trans_28_C"/>
</dbReference>
<dbReference type="InterPro" id="IPR004276">
    <property type="entry name" value="GlycoTrans_28_N"/>
</dbReference>
<dbReference type="NCBIfam" id="TIGR01133">
    <property type="entry name" value="murG"/>
    <property type="match status" value="1"/>
</dbReference>
<dbReference type="PANTHER" id="PTHR21015:SF22">
    <property type="entry name" value="GLYCOSYLTRANSFERASE"/>
    <property type="match status" value="1"/>
</dbReference>
<dbReference type="PANTHER" id="PTHR21015">
    <property type="entry name" value="UDP-N-ACETYLGLUCOSAMINE--N-ACETYLMURAMYL-(PENTAPEPTIDE) PYROPHOSPHORYL-UNDECAPRENOL N-ACETYLGLUCOSAMINE TRANSFERASE 1"/>
    <property type="match status" value="1"/>
</dbReference>
<dbReference type="Pfam" id="PF04101">
    <property type="entry name" value="Glyco_tran_28_C"/>
    <property type="match status" value="1"/>
</dbReference>
<dbReference type="Pfam" id="PF03033">
    <property type="entry name" value="Glyco_transf_28"/>
    <property type="match status" value="1"/>
</dbReference>
<dbReference type="SUPFAM" id="SSF53756">
    <property type="entry name" value="UDP-Glycosyltransferase/glycogen phosphorylase"/>
    <property type="match status" value="1"/>
</dbReference>
<gene>
    <name evidence="1" type="primary">murG</name>
    <name type="ordered locus">RF_0636</name>
</gene>